<name>TPIS_SCHMA</name>
<reference key="1">
    <citation type="journal article" date="1992" name="Proc. Natl. Acad. Sci. U.S.A.">
        <title>cDNA cloning and functional expression of the Schistosoma mansoni protective antigen triose-phosphate isomerase.</title>
        <authorList>
            <person name="Shoemaker C."/>
            <person name="Gross A."/>
            <person name="Gebremichael A."/>
            <person name="Harn D."/>
        </authorList>
    </citation>
    <scope>NUCLEOTIDE SEQUENCE [MRNA]</scope>
</reference>
<reference key="2">
    <citation type="journal article" date="1993" name="Mol. Biochem. Parasitol.">
        <title>Characterization of the Schistosoma mansoni gene encoding the glycolytic enzyme, triosephosphate isomerase.</title>
        <authorList>
            <person name="Dos Reis M.G."/>
            <person name="Davis R.E."/>
            <person name="Singh H."/>
            <person name="Skelly P.J."/>
            <person name="Shoemaker C.B."/>
        </authorList>
    </citation>
    <scope>NUCLEOTIDE SEQUENCE [GENOMIC DNA]</scope>
    <source>
        <strain>Puerto Rican</strain>
    </source>
</reference>
<reference key="3">
    <citation type="journal article" date="1992" name="J. Immunol.">
        <title>A protective monoclonal antibody specifically recognizes and alters the catalytic activity of schistosome triose-phosphate isomerase.</title>
        <authorList>
            <person name="Harn D.A."/>
            <person name="Gu W."/>
            <person name="Oligino L.D."/>
            <person name="Mitsuyama M."/>
            <person name="Gebremichael A."/>
            <person name="Richter D."/>
        </authorList>
    </citation>
    <scope>PROTEIN SEQUENCE OF 87-98; 182-192 AND 210-222</scope>
</reference>
<feature type="chain" id="PRO_0000090140" description="Triosephosphate isomerase">
    <location>
        <begin position="1"/>
        <end position="253"/>
    </location>
</feature>
<feature type="active site" description="Electrophile" evidence="1">
    <location>
        <position position="96"/>
    </location>
</feature>
<feature type="active site" description="Proton acceptor" evidence="1">
    <location>
        <position position="169"/>
    </location>
</feature>
<feature type="binding site" evidence="1">
    <location>
        <position position="12"/>
    </location>
    <ligand>
        <name>substrate</name>
    </ligand>
</feature>
<feature type="binding site" evidence="1">
    <location>
        <position position="14"/>
    </location>
    <ligand>
        <name>substrate</name>
    </ligand>
</feature>
<feature type="strand" evidence="3">
    <location>
        <begin position="7"/>
        <end position="12"/>
    </location>
</feature>
<feature type="helix" evidence="3">
    <location>
        <begin position="19"/>
        <end position="31"/>
    </location>
</feature>
<feature type="strand" evidence="3">
    <location>
        <begin position="38"/>
        <end position="43"/>
    </location>
</feature>
<feature type="helix" evidence="3">
    <location>
        <begin position="46"/>
        <end position="48"/>
    </location>
</feature>
<feature type="helix" evidence="3">
    <location>
        <begin position="49"/>
        <end position="55"/>
    </location>
</feature>
<feature type="strand" evidence="3">
    <location>
        <begin position="60"/>
        <end position="65"/>
    </location>
</feature>
<feature type="strand" evidence="3">
    <location>
        <begin position="69"/>
        <end position="74"/>
    </location>
</feature>
<feature type="helix" evidence="3">
    <location>
        <begin position="81"/>
        <end position="86"/>
    </location>
</feature>
<feature type="strand" evidence="3">
    <location>
        <begin position="91"/>
        <end position="95"/>
    </location>
</feature>
<feature type="helix" evidence="3">
    <location>
        <begin position="97"/>
        <end position="101"/>
    </location>
</feature>
<feature type="helix" evidence="3">
    <location>
        <begin position="107"/>
        <end position="119"/>
    </location>
</feature>
<feature type="strand" evidence="3">
    <location>
        <begin position="123"/>
        <end position="128"/>
    </location>
</feature>
<feature type="helix" evidence="3">
    <location>
        <begin position="132"/>
        <end position="136"/>
    </location>
</feature>
<feature type="helix" evidence="3">
    <location>
        <begin position="140"/>
        <end position="152"/>
    </location>
</feature>
<feature type="helix" evidence="3">
    <location>
        <begin position="158"/>
        <end position="161"/>
    </location>
</feature>
<feature type="strand" evidence="3">
    <location>
        <begin position="164"/>
        <end position="168"/>
    </location>
</feature>
<feature type="helix" evidence="3">
    <location>
        <begin position="171"/>
        <end position="173"/>
    </location>
</feature>
<feature type="strand" evidence="3">
    <location>
        <begin position="174"/>
        <end position="177"/>
    </location>
</feature>
<feature type="helix" evidence="3">
    <location>
        <begin position="182"/>
        <end position="199"/>
    </location>
</feature>
<feature type="helix" evidence="3">
    <location>
        <begin position="204"/>
        <end position="207"/>
    </location>
</feature>
<feature type="strand" evidence="3">
    <location>
        <begin position="209"/>
        <end position="215"/>
    </location>
</feature>
<feature type="turn" evidence="3">
    <location>
        <begin position="218"/>
        <end position="220"/>
    </location>
</feature>
<feature type="helix" evidence="3">
    <location>
        <begin position="221"/>
        <end position="225"/>
    </location>
</feature>
<feature type="strand" evidence="3">
    <location>
        <begin position="232"/>
        <end position="236"/>
    </location>
</feature>
<feature type="helix" evidence="3">
    <location>
        <begin position="237"/>
        <end position="240"/>
    </location>
</feature>
<feature type="helix" evidence="3">
    <location>
        <begin position="244"/>
        <end position="247"/>
    </location>
</feature>
<feature type="turn" evidence="3">
    <location>
        <begin position="248"/>
        <end position="251"/>
    </location>
</feature>
<keyword id="KW-0002">3D-structure</keyword>
<keyword id="KW-0963">Cytoplasm</keyword>
<keyword id="KW-0903">Direct protein sequencing</keyword>
<keyword id="KW-0312">Gluconeogenesis</keyword>
<keyword id="KW-0324">Glycolysis</keyword>
<keyword id="KW-0413">Isomerase</keyword>
<keyword id="KW-1185">Reference proteome</keyword>
<protein>
    <recommendedName>
        <fullName>Triosephosphate isomerase</fullName>
        <shortName>TIM</shortName>
        <ecNumber>5.3.1.1</ecNumber>
    </recommendedName>
    <alternativeName>
        <fullName>Triose-phosphate isomerase</fullName>
    </alternativeName>
</protein>
<dbReference type="EC" id="5.3.1.1"/>
<dbReference type="EMBL" id="M83294">
    <property type="protein sequence ID" value="AAA29941.1"/>
    <property type="molecule type" value="mRNA"/>
</dbReference>
<dbReference type="EMBL" id="L07286">
    <property type="protein sequence ID" value="AAA29919.1"/>
    <property type="molecule type" value="Genomic_DNA"/>
</dbReference>
<dbReference type="EMBL" id="L06636">
    <property type="protein sequence ID" value="AAA29919.1"/>
    <property type="status" value="JOINED"/>
    <property type="molecule type" value="Genomic_DNA"/>
</dbReference>
<dbReference type="EMBL" id="L07283">
    <property type="protein sequence ID" value="AAA29919.1"/>
    <property type="status" value="JOINED"/>
    <property type="molecule type" value="Genomic_DNA"/>
</dbReference>
<dbReference type="EMBL" id="L07284">
    <property type="protein sequence ID" value="AAA29919.1"/>
    <property type="status" value="JOINED"/>
    <property type="molecule type" value="Genomic_DNA"/>
</dbReference>
<dbReference type="EMBL" id="L07285">
    <property type="protein sequence ID" value="AAA29919.1"/>
    <property type="status" value="JOINED"/>
    <property type="molecule type" value="Genomic_DNA"/>
</dbReference>
<dbReference type="PIR" id="A38233">
    <property type="entry name" value="A38233"/>
</dbReference>
<dbReference type="PDB" id="6OOI">
    <property type="method" value="X-ray"/>
    <property type="resolution" value="2.14 A"/>
    <property type="chains" value="A/B/C/D/E/F/G/H=1-253"/>
</dbReference>
<dbReference type="PDBsum" id="6OOI"/>
<dbReference type="SMR" id="P48501"/>
<dbReference type="FunCoup" id="P48501">
    <property type="interactions" value="1100"/>
</dbReference>
<dbReference type="STRING" id="6183.P48501"/>
<dbReference type="eggNOG" id="KOG1643">
    <property type="taxonomic scope" value="Eukaryota"/>
</dbReference>
<dbReference type="HOGENOM" id="CLU_024251_2_0_1"/>
<dbReference type="InParanoid" id="P48501"/>
<dbReference type="UniPathway" id="UPA00109">
    <property type="reaction ID" value="UER00189"/>
</dbReference>
<dbReference type="UniPathway" id="UPA00138"/>
<dbReference type="Proteomes" id="UP000008854">
    <property type="component" value="Unassembled WGS sequence"/>
</dbReference>
<dbReference type="GO" id="GO:0005829">
    <property type="term" value="C:cytosol"/>
    <property type="evidence" value="ECO:0007669"/>
    <property type="project" value="TreeGrafter"/>
</dbReference>
<dbReference type="GO" id="GO:0004807">
    <property type="term" value="F:triose-phosphate isomerase activity"/>
    <property type="evidence" value="ECO:0007669"/>
    <property type="project" value="UniProtKB-EC"/>
</dbReference>
<dbReference type="GO" id="GO:0006094">
    <property type="term" value="P:gluconeogenesis"/>
    <property type="evidence" value="ECO:0007669"/>
    <property type="project" value="UniProtKB-UniPathway"/>
</dbReference>
<dbReference type="GO" id="GO:0046166">
    <property type="term" value="P:glyceraldehyde-3-phosphate biosynthetic process"/>
    <property type="evidence" value="ECO:0007669"/>
    <property type="project" value="TreeGrafter"/>
</dbReference>
<dbReference type="GO" id="GO:0019563">
    <property type="term" value="P:glycerol catabolic process"/>
    <property type="evidence" value="ECO:0007669"/>
    <property type="project" value="TreeGrafter"/>
</dbReference>
<dbReference type="GO" id="GO:0006096">
    <property type="term" value="P:glycolytic process"/>
    <property type="evidence" value="ECO:0007669"/>
    <property type="project" value="UniProtKB-UniPathway"/>
</dbReference>
<dbReference type="CDD" id="cd00311">
    <property type="entry name" value="TIM"/>
    <property type="match status" value="1"/>
</dbReference>
<dbReference type="FunFam" id="3.20.20.70:FF:000025">
    <property type="entry name" value="Triosephosphate isomerase"/>
    <property type="match status" value="1"/>
</dbReference>
<dbReference type="Gene3D" id="3.20.20.70">
    <property type="entry name" value="Aldolase class I"/>
    <property type="match status" value="1"/>
</dbReference>
<dbReference type="HAMAP" id="MF_00147_B">
    <property type="entry name" value="TIM_B"/>
    <property type="match status" value="1"/>
</dbReference>
<dbReference type="InterPro" id="IPR013785">
    <property type="entry name" value="Aldolase_TIM"/>
</dbReference>
<dbReference type="InterPro" id="IPR035990">
    <property type="entry name" value="TIM_sf"/>
</dbReference>
<dbReference type="InterPro" id="IPR022896">
    <property type="entry name" value="TrioseP_Isoase_bac/euk"/>
</dbReference>
<dbReference type="InterPro" id="IPR000652">
    <property type="entry name" value="Triosephosphate_isomerase"/>
</dbReference>
<dbReference type="InterPro" id="IPR020861">
    <property type="entry name" value="Triosephosphate_isomerase_AS"/>
</dbReference>
<dbReference type="NCBIfam" id="TIGR00419">
    <property type="entry name" value="tim"/>
    <property type="match status" value="1"/>
</dbReference>
<dbReference type="PANTHER" id="PTHR21139">
    <property type="entry name" value="TRIOSEPHOSPHATE ISOMERASE"/>
    <property type="match status" value="1"/>
</dbReference>
<dbReference type="PANTHER" id="PTHR21139:SF2">
    <property type="entry name" value="TRIOSEPHOSPHATE ISOMERASE"/>
    <property type="match status" value="1"/>
</dbReference>
<dbReference type="Pfam" id="PF00121">
    <property type="entry name" value="TIM"/>
    <property type="match status" value="1"/>
</dbReference>
<dbReference type="SUPFAM" id="SSF51351">
    <property type="entry name" value="Triosephosphate isomerase (TIM)"/>
    <property type="match status" value="1"/>
</dbReference>
<dbReference type="PROSITE" id="PS00171">
    <property type="entry name" value="TIM_1"/>
    <property type="match status" value="1"/>
</dbReference>
<dbReference type="PROSITE" id="PS51440">
    <property type="entry name" value="TIM_2"/>
    <property type="match status" value="1"/>
</dbReference>
<gene>
    <name type="primary">TPI</name>
</gene>
<organism>
    <name type="scientific">Schistosoma mansoni</name>
    <name type="common">Blood fluke</name>
    <dbReference type="NCBI Taxonomy" id="6183"/>
    <lineage>
        <taxon>Eukaryota</taxon>
        <taxon>Metazoa</taxon>
        <taxon>Spiralia</taxon>
        <taxon>Lophotrochozoa</taxon>
        <taxon>Platyhelminthes</taxon>
        <taxon>Trematoda</taxon>
        <taxon>Digenea</taxon>
        <taxon>Strigeidida</taxon>
        <taxon>Schistosomatoidea</taxon>
        <taxon>Schistosomatidae</taxon>
        <taxon>Schistosoma</taxon>
    </lineage>
</organism>
<sequence>MSGSRKFFVGGNWKMNGSRDDNDKLLKLLSEAHFDDNTEVLIAPPSVFLHEIRKSLKKEIHVAAQNCYKVSKGAFTGEISPAMIRDIGCDWVILGHSERRNIFGESDELIAEKVQHALAEGLSVIACIGETLSERESNKTEEVCVRQLKAIANKIKSADEWKRVVVAYEPVWAIGTGKVATPQQAQEVHNFLRKWFKTNAPNGVDEKIRIIYGGSVTAANCKELAQQHDVDGFLVGGASLKPEFTEICKARQR</sequence>
<evidence type="ECO:0000250" key="1"/>
<evidence type="ECO:0000305" key="2"/>
<evidence type="ECO:0007829" key="3">
    <source>
        <dbReference type="PDB" id="6OOI"/>
    </source>
</evidence>
<comment type="function">
    <text>Antigen to the host M.1 monoclonal antibody.</text>
</comment>
<comment type="catalytic activity">
    <reaction>
        <text>D-glyceraldehyde 3-phosphate = dihydroxyacetone phosphate</text>
        <dbReference type="Rhea" id="RHEA:18585"/>
        <dbReference type="ChEBI" id="CHEBI:57642"/>
        <dbReference type="ChEBI" id="CHEBI:59776"/>
        <dbReference type="EC" id="5.3.1.1"/>
    </reaction>
</comment>
<comment type="pathway">
    <text>Carbohydrate biosynthesis; gluconeogenesis.</text>
</comment>
<comment type="pathway">
    <text>Carbohydrate degradation; glycolysis; D-glyceraldehyde 3-phosphate from glycerone phosphate: step 1/1.</text>
</comment>
<comment type="subunit">
    <text>Homodimer.</text>
</comment>
<comment type="subcellular location">
    <subcellularLocation>
        <location evidence="2">Cytoplasm</location>
    </subcellularLocation>
</comment>
<comment type="similarity">
    <text evidence="2">Belongs to the triosephosphate isomerase family.</text>
</comment>
<proteinExistence type="evidence at protein level"/>
<accession>P48501</accession>